<sequence>MANDPIHQFQVSRWIPIDVGGVDLSFTNVSAFMVATVVLASGFLYLTSSGRGLIPTRLQSVSEMAYEFVATSLRDSAGSKGMKFFPFVFSLFMFVLVANFIGLFPYFYTVTSQIIVTFALSLLVIGTVIFYGFFKHGFGFLKLFVPSGVPGIIVPLVVLIEIISFLSRPISLSVRLFANMLAGHITLKVFAGFVVSLSSLGALGIGGAVLPLLMTVAITALEFLVAFLQAYVFTVLTCMYINDAVHPGH</sequence>
<evidence type="ECO:0000255" key="1">
    <source>
        <dbReference type="HAMAP-Rule" id="MF_01393"/>
    </source>
</evidence>
<comment type="function">
    <text evidence="1">Key component of the proton channel; it plays a direct role in the translocation of protons across the membrane.</text>
</comment>
<comment type="subunit">
    <text evidence="1">F-type ATPases have 2 components, CF(1) - the catalytic core - and CF(0) - the membrane proton channel. CF(1) has five subunits: alpha(3), beta(3), gamma(1), delta(1), epsilon(1). CF(0) has three main subunits: a(1), b(2) and c(9-12). The alpha and beta chains form an alternating ring which encloses part of the gamma chain. CF(1) is attached to CF(0) by a central stalk formed by the gamma and epsilon chains, while a peripheral stalk is formed by the delta and b chains.</text>
</comment>
<comment type="subcellular location">
    <subcellularLocation>
        <location evidence="1">Cell inner membrane</location>
        <topology evidence="1">Multi-pass membrane protein</topology>
    </subcellularLocation>
</comment>
<comment type="similarity">
    <text evidence="1">Belongs to the ATPase A chain family.</text>
</comment>
<name>ATP6_BRUAB</name>
<proteinExistence type="inferred from homology"/>
<accession>Q57EY0</accession>
<protein>
    <recommendedName>
        <fullName evidence="1">ATP synthase subunit a</fullName>
    </recommendedName>
    <alternativeName>
        <fullName evidence="1">ATP synthase F0 sector subunit a</fullName>
    </alternativeName>
    <alternativeName>
        <fullName evidence="1">F-ATPase subunit 6</fullName>
    </alternativeName>
</protein>
<reference key="1">
    <citation type="journal article" date="2005" name="J. Bacteriol.">
        <title>Completion of the genome sequence of Brucella abortus and comparison to the highly similar genomes of Brucella melitensis and Brucella suis.</title>
        <authorList>
            <person name="Halling S.M."/>
            <person name="Peterson-Burch B.D."/>
            <person name="Bricker B.J."/>
            <person name="Zuerner R.L."/>
            <person name="Qing Z."/>
            <person name="Li L.-L."/>
            <person name="Kapur V."/>
            <person name="Alt D.P."/>
            <person name="Olsen S.C."/>
        </authorList>
    </citation>
    <scope>NUCLEOTIDE SEQUENCE [LARGE SCALE GENOMIC DNA]</scope>
    <source>
        <strain>9-941</strain>
    </source>
</reference>
<keyword id="KW-0066">ATP synthesis</keyword>
<keyword id="KW-0997">Cell inner membrane</keyword>
<keyword id="KW-1003">Cell membrane</keyword>
<keyword id="KW-0138">CF(0)</keyword>
<keyword id="KW-0375">Hydrogen ion transport</keyword>
<keyword id="KW-0406">Ion transport</keyword>
<keyword id="KW-0472">Membrane</keyword>
<keyword id="KW-0812">Transmembrane</keyword>
<keyword id="KW-1133">Transmembrane helix</keyword>
<keyword id="KW-0813">Transport</keyword>
<gene>
    <name evidence="1" type="primary">atpB</name>
    <name type="ordered locus">BruAb1_0407</name>
</gene>
<dbReference type="EMBL" id="AE017223">
    <property type="protein sequence ID" value="AAX73804.1"/>
    <property type="molecule type" value="Genomic_DNA"/>
</dbReference>
<dbReference type="RefSeq" id="WP_002963543.1">
    <property type="nucleotide sequence ID" value="NC_006932.1"/>
</dbReference>
<dbReference type="SMR" id="Q57EY0"/>
<dbReference type="EnsemblBacteria" id="AAX73804">
    <property type="protein sequence ID" value="AAX73804"/>
    <property type="gene ID" value="BruAb1_0407"/>
</dbReference>
<dbReference type="KEGG" id="bmb:BruAb1_0407"/>
<dbReference type="HOGENOM" id="CLU_041018_0_2_5"/>
<dbReference type="Proteomes" id="UP000000540">
    <property type="component" value="Chromosome I"/>
</dbReference>
<dbReference type="GO" id="GO:0005886">
    <property type="term" value="C:plasma membrane"/>
    <property type="evidence" value="ECO:0007669"/>
    <property type="project" value="UniProtKB-SubCell"/>
</dbReference>
<dbReference type="GO" id="GO:0045259">
    <property type="term" value="C:proton-transporting ATP synthase complex"/>
    <property type="evidence" value="ECO:0007669"/>
    <property type="project" value="UniProtKB-KW"/>
</dbReference>
<dbReference type="GO" id="GO:0046933">
    <property type="term" value="F:proton-transporting ATP synthase activity, rotational mechanism"/>
    <property type="evidence" value="ECO:0007669"/>
    <property type="project" value="UniProtKB-UniRule"/>
</dbReference>
<dbReference type="CDD" id="cd00310">
    <property type="entry name" value="ATP-synt_Fo_a_6"/>
    <property type="match status" value="1"/>
</dbReference>
<dbReference type="FunFam" id="1.20.120.220:FF:000003">
    <property type="entry name" value="ATP synthase subunit a"/>
    <property type="match status" value="1"/>
</dbReference>
<dbReference type="Gene3D" id="1.20.120.220">
    <property type="entry name" value="ATP synthase, F0 complex, subunit A"/>
    <property type="match status" value="1"/>
</dbReference>
<dbReference type="HAMAP" id="MF_01393">
    <property type="entry name" value="ATP_synth_a_bact"/>
    <property type="match status" value="1"/>
</dbReference>
<dbReference type="InterPro" id="IPR000568">
    <property type="entry name" value="ATP_synth_F0_asu"/>
</dbReference>
<dbReference type="InterPro" id="IPR023011">
    <property type="entry name" value="ATP_synth_F0_asu_AS"/>
</dbReference>
<dbReference type="InterPro" id="IPR045083">
    <property type="entry name" value="ATP_synth_F0_asu_bact/mt"/>
</dbReference>
<dbReference type="InterPro" id="IPR035908">
    <property type="entry name" value="F0_ATP_A_sf"/>
</dbReference>
<dbReference type="NCBIfam" id="TIGR01131">
    <property type="entry name" value="ATP_synt_6_or_A"/>
    <property type="match status" value="1"/>
</dbReference>
<dbReference type="NCBIfam" id="NF004482">
    <property type="entry name" value="PRK05815.2-4"/>
    <property type="match status" value="1"/>
</dbReference>
<dbReference type="PANTHER" id="PTHR11410">
    <property type="entry name" value="ATP SYNTHASE SUBUNIT A"/>
    <property type="match status" value="1"/>
</dbReference>
<dbReference type="PANTHER" id="PTHR11410:SF0">
    <property type="entry name" value="ATP SYNTHASE SUBUNIT A"/>
    <property type="match status" value="1"/>
</dbReference>
<dbReference type="Pfam" id="PF00119">
    <property type="entry name" value="ATP-synt_A"/>
    <property type="match status" value="1"/>
</dbReference>
<dbReference type="PRINTS" id="PR00123">
    <property type="entry name" value="ATPASEA"/>
</dbReference>
<dbReference type="SUPFAM" id="SSF81336">
    <property type="entry name" value="F1F0 ATP synthase subunit A"/>
    <property type="match status" value="1"/>
</dbReference>
<dbReference type="PROSITE" id="PS00449">
    <property type="entry name" value="ATPASE_A"/>
    <property type="match status" value="1"/>
</dbReference>
<feature type="chain" id="PRO_0000362252" description="ATP synthase subunit a">
    <location>
        <begin position="1"/>
        <end position="249"/>
    </location>
</feature>
<feature type="transmembrane region" description="Helical" evidence="1">
    <location>
        <begin position="26"/>
        <end position="46"/>
    </location>
</feature>
<feature type="transmembrane region" description="Helical" evidence="1">
    <location>
        <begin position="84"/>
        <end position="104"/>
    </location>
</feature>
<feature type="transmembrane region" description="Helical" evidence="1">
    <location>
        <begin position="114"/>
        <end position="134"/>
    </location>
</feature>
<feature type="transmembrane region" description="Helical" evidence="1">
    <location>
        <begin position="143"/>
        <end position="163"/>
    </location>
</feature>
<feature type="transmembrane region" description="Helical" evidence="1">
    <location>
        <begin position="185"/>
        <end position="205"/>
    </location>
</feature>
<feature type="transmembrane region" description="Helical" evidence="1">
    <location>
        <begin position="208"/>
        <end position="228"/>
    </location>
</feature>
<organism>
    <name type="scientific">Brucella abortus biovar 1 (strain 9-941)</name>
    <dbReference type="NCBI Taxonomy" id="262698"/>
    <lineage>
        <taxon>Bacteria</taxon>
        <taxon>Pseudomonadati</taxon>
        <taxon>Pseudomonadota</taxon>
        <taxon>Alphaproteobacteria</taxon>
        <taxon>Hyphomicrobiales</taxon>
        <taxon>Brucellaceae</taxon>
        <taxon>Brucella/Ochrobactrum group</taxon>
        <taxon>Brucella</taxon>
    </lineage>
</organism>